<proteinExistence type="inferred from homology"/>
<evidence type="ECO:0000255" key="1">
    <source>
        <dbReference type="HAMAP-Rule" id="MF_00167"/>
    </source>
</evidence>
<reference key="1">
    <citation type="submission" date="2008-04" db="EMBL/GenBank/DDBJ databases">
        <title>Complete sequence of chromosome of Exiguobacterium sibiricum 255-15.</title>
        <authorList>
            <consortium name="US DOE Joint Genome Institute"/>
            <person name="Copeland A."/>
            <person name="Lucas S."/>
            <person name="Lapidus A."/>
            <person name="Glavina del Rio T."/>
            <person name="Dalin E."/>
            <person name="Tice H."/>
            <person name="Bruce D."/>
            <person name="Goodwin L."/>
            <person name="Pitluck S."/>
            <person name="Kiss H."/>
            <person name="Chertkov O."/>
            <person name="Monk C."/>
            <person name="Brettin T."/>
            <person name="Detter J.C."/>
            <person name="Han C."/>
            <person name="Kuske C.R."/>
            <person name="Schmutz J."/>
            <person name="Larimer F."/>
            <person name="Land M."/>
            <person name="Hauser L."/>
            <person name="Kyrpides N."/>
            <person name="Mikhailova N."/>
            <person name="Vishnivetskaya T."/>
            <person name="Rodrigues D.F."/>
            <person name="Gilichinsky D."/>
            <person name="Tiedje J."/>
            <person name="Richardson P."/>
        </authorList>
    </citation>
    <scope>NUCLEOTIDE SEQUENCE [LARGE SCALE GENOMIC DNA]</scope>
    <source>
        <strain>DSM 17290 / CCUG 55495 / CIP 109462 / JCM 13490 / 255-15</strain>
    </source>
</reference>
<sequence length="75" mass="8370">MLVLKRKTGEAIQIGDDIELTILAIEGDQVKLGIHAPRQIDIHRKEIYLAIQDENAEASQSTGLMSQLLKQRTDS</sequence>
<gene>
    <name evidence="1" type="primary">csrA</name>
    <name type="ordered locus">Exig_2457</name>
</gene>
<comment type="function">
    <text evidence="1">A translational regulator that binds mRNA to regulate translation initiation and/or mRNA stability. Usually binds in the 5'-UTR at or near the Shine-Dalgarno sequence preventing ribosome-binding, thus repressing translation. Its main target seems to be the major flagellin gene, while its function is anatagonized by FliW.</text>
</comment>
<comment type="subunit">
    <text evidence="1">Homodimer; the beta-strands of each monomer intercalate to form a hydrophobic core, while the alpha-helices form wings that extend away from the core.</text>
</comment>
<comment type="subcellular location">
    <subcellularLocation>
        <location evidence="1">Cytoplasm</location>
    </subcellularLocation>
</comment>
<comment type="similarity">
    <text evidence="1">Belongs to the CsrA/RsmA family.</text>
</comment>
<organism>
    <name type="scientific">Exiguobacterium sibiricum (strain DSM 17290 / CCUG 55495 / CIP 109462 / JCM 13490 / 255-15)</name>
    <dbReference type="NCBI Taxonomy" id="262543"/>
    <lineage>
        <taxon>Bacteria</taxon>
        <taxon>Bacillati</taxon>
        <taxon>Bacillota</taxon>
        <taxon>Bacilli</taxon>
        <taxon>Bacillales</taxon>
        <taxon>Bacillales Family XII. Incertae Sedis</taxon>
        <taxon>Exiguobacterium</taxon>
    </lineage>
</organism>
<name>CSRA_EXIS2</name>
<keyword id="KW-1005">Bacterial flagellum biogenesis</keyword>
<keyword id="KW-0963">Cytoplasm</keyword>
<keyword id="KW-1185">Reference proteome</keyword>
<keyword id="KW-0678">Repressor</keyword>
<keyword id="KW-0694">RNA-binding</keyword>
<keyword id="KW-0810">Translation regulation</keyword>
<protein>
    <recommendedName>
        <fullName evidence="1">Translational regulator CsrA</fullName>
    </recommendedName>
</protein>
<feature type="chain" id="PRO_1000097492" description="Translational regulator CsrA">
    <location>
        <begin position="1"/>
        <end position="75"/>
    </location>
</feature>
<accession>B1YLK2</accession>
<dbReference type="EMBL" id="CP001022">
    <property type="protein sequence ID" value="ACB61907.1"/>
    <property type="molecule type" value="Genomic_DNA"/>
</dbReference>
<dbReference type="RefSeq" id="WP_012371323.1">
    <property type="nucleotide sequence ID" value="NC_010556.1"/>
</dbReference>
<dbReference type="SMR" id="B1YLK2"/>
<dbReference type="STRING" id="262543.Exig_2457"/>
<dbReference type="KEGG" id="esi:Exig_2457"/>
<dbReference type="eggNOG" id="COG1551">
    <property type="taxonomic scope" value="Bacteria"/>
</dbReference>
<dbReference type="HOGENOM" id="CLU_164837_0_2_9"/>
<dbReference type="OrthoDB" id="9809061at2"/>
<dbReference type="Proteomes" id="UP000001681">
    <property type="component" value="Chromosome"/>
</dbReference>
<dbReference type="GO" id="GO:0005829">
    <property type="term" value="C:cytosol"/>
    <property type="evidence" value="ECO:0007669"/>
    <property type="project" value="TreeGrafter"/>
</dbReference>
<dbReference type="GO" id="GO:0048027">
    <property type="term" value="F:mRNA 5'-UTR binding"/>
    <property type="evidence" value="ECO:0007669"/>
    <property type="project" value="UniProtKB-UniRule"/>
</dbReference>
<dbReference type="GO" id="GO:0044781">
    <property type="term" value="P:bacterial-type flagellum organization"/>
    <property type="evidence" value="ECO:0007669"/>
    <property type="project" value="UniProtKB-KW"/>
</dbReference>
<dbReference type="GO" id="GO:0006402">
    <property type="term" value="P:mRNA catabolic process"/>
    <property type="evidence" value="ECO:0007669"/>
    <property type="project" value="InterPro"/>
</dbReference>
<dbReference type="GO" id="GO:0045947">
    <property type="term" value="P:negative regulation of translational initiation"/>
    <property type="evidence" value="ECO:0007669"/>
    <property type="project" value="UniProtKB-UniRule"/>
</dbReference>
<dbReference type="GO" id="GO:1902208">
    <property type="term" value="P:regulation of bacterial-type flagellum assembly"/>
    <property type="evidence" value="ECO:0007669"/>
    <property type="project" value="UniProtKB-UniRule"/>
</dbReference>
<dbReference type="GO" id="GO:0006109">
    <property type="term" value="P:regulation of carbohydrate metabolic process"/>
    <property type="evidence" value="ECO:0007669"/>
    <property type="project" value="InterPro"/>
</dbReference>
<dbReference type="FunFam" id="2.60.40.4380:FF:000002">
    <property type="entry name" value="Translational regulator CsrA"/>
    <property type="match status" value="1"/>
</dbReference>
<dbReference type="Gene3D" id="2.60.40.4380">
    <property type="entry name" value="Translational regulator CsrA"/>
    <property type="match status" value="1"/>
</dbReference>
<dbReference type="HAMAP" id="MF_00167">
    <property type="entry name" value="CsrA"/>
    <property type="match status" value="1"/>
</dbReference>
<dbReference type="InterPro" id="IPR003751">
    <property type="entry name" value="CsrA"/>
</dbReference>
<dbReference type="InterPro" id="IPR036107">
    <property type="entry name" value="CsrA_sf"/>
</dbReference>
<dbReference type="NCBIfam" id="TIGR00202">
    <property type="entry name" value="csrA"/>
    <property type="match status" value="1"/>
</dbReference>
<dbReference type="NCBIfam" id="NF002469">
    <property type="entry name" value="PRK01712.1"/>
    <property type="match status" value="1"/>
</dbReference>
<dbReference type="PANTHER" id="PTHR34984">
    <property type="entry name" value="CARBON STORAGE REGULATOR"/>
    <property type="match status" value="1"/>
</dbReference>
<dbReference type="PANTHER" id="PTHR34984:SF1">
    <property type="entry name" value="CARBON STORAGE REGULATOR"/>
    <property type="match status" value="1"/>
</dbReference>
<dbReference type="Pfam" id="PF02599">
    <property type="entry name" value="CsrA"/>
    <property type="match status" value="1"/>
</dbReference>
<dbReference type="SUPFAM" id="SSF117130">
    <property type="entry name" value="CsrA-like"/>
    <property type="match status" value="1"/>
</dbReference>